<sequence length="564" mass="62270">MESEQPAAVKASAPIEEPQSTETAVELGKHSTLKADLSIDKLETATTEATNAVVEPVEMEQQVENELVNESTQAMTSTTTQEKVVGSVNNLVEEQQCVEMEFETSSDLVVQGSPSEESKKVASDASATVTAPQVQPAPHVDSSPQASGLSLLAAYSSDDSDDEKVTPVQNGDNDVIEVPVTDPASSTTAYRPVVAVSSDDESSKSSSSSSDSDSDSEGEYLTVLRKKIDKRINTVDCDEDDEDFDEDGATGDRSRRRQPPKVRGEMLLDDLPPIHQLEITVPEDECVELGKVQSIVDQLVLVSVLPNSMLFDLDTVLFLEKGRKVLGEVFDVLGQVSDPLYCVRFNSNKQILDRGIKIGDVVYCAPKTEHTQFVILSKLMQVRGSDASWEHDVEPPARYVDHSDDEEEREARAEQRKRRQRDRTNSTDSVDTVTSVATTATKASSVAPPPRQRGRRGQRESFRQSQRPSINQHNQNQPQDEQYNFHPSYNPGSWHSNYYQNYHQAAANFNMAQQHPGMPFPVPNYGYGMPYAMPPMYPHMYPPPPPFAPPPPNNQSHQGQPPPS</sequence>
<organism evidence="7">
    <name type="scientific">Drosophila melanogaster</name>
    <name type="common">Fruit fly</name>
    <dbReference type="NCBI Taxonomy" id="7227"/>
    <lineage>
        <taxon>Eukaryota</taxon>
        <taxon>Metazoa</taxon>
        <taxon>Ecdysozoa</taxon>
        <taxon>Arthropoda</taxon>
        <taxon>Hexapoda</taxon>
        <taxon>Insecta</taxon>
        <taxon>Pterygota</taxon>
        <taxon>Neoptera</taxon>
        <taxon>Endopterygota</taxon>
        <taxon>Diptera</taxon>
        <taxon>Brachycera</taxon>
        <taxon>Muscomorpha</taxon>
        <taxon>Ephydroidea</taxon>
        <taxon>Drosophilidae</taxon>
        <taxon>Drosophila</taxon>
        <taxon>Sophophora</taxon>
    </lineage>
</organism>
<dbReference type="EMBL" id="AE014134">
    <property type="protein sequence ID" value="AAF53693.2"/>
    <property type="molecule type" value="Genomic_DNA"/>
</dbReference>
<dbReference type="EMBL" id="AY051589">
    <property type="protein sequence ID" value="AAK93013.1"/>
    <property type="molecule type" value="mRNA"/>
</dbReference>
<dbReference type="RefSeq" id="NP_609898.1">
    <property type="nucleotide sequence ID" value="NM_136054.5"/>
</dbReference>
<dbReference type="SMR" id="Q9VJ62"/>
<dbReference type="BioGRID" id="61119">
    <property type="interactions" value="6"/>
</dbReference>
<dbReference type="FunCoup" id="Q9VJ62">
    <property type="interactions" value="12"/>
</dbReference>
<dbReference type="IntAct" id="Q9VJ62">
    <property type="interactions" value="3"/>
</dbReference>
<dbReference type="STRING" id="7227.FBpp0080647"/>
<dbReference type="iPTMnet" id="Q9VJ62"/>
<dbReference type="PaxDb" id="7227-FBpp0080647"/>
<dbReference type="EnsemblMetazoa" id="FBtr0081097">
    <property type="protein sequence ID" value="FBpp0080647"/>
    <property type="gene ID" value="FBgn0032701"/>
</dbReference>
<dbReference type="GeneID" id="35125"/>
<dbReference type="KEGG" id="dme:Dmel_CG10341"/>
<dbReference type="UCSC" id="CG10341-RA">
    <property type="organism name" value="d. melanogaster"/>
</dbReference>
<dbReference type="AGR" id="FB:FBgn0032701"/>
<dbReference type="FlyBase" id="FBgn0032701">
    <property type="gene designation" value="CG10341"/>
</dbReference>
<dbReference type="VEuPathDB" id="VectorBase:FBgn0032701"/>
<dbReference type="eggNOG" id="KOG2236">
    <property type="taxonomic scope" value="Eukaryota"/>
</dbReference>
<dbReference type="GeneTree" id="ENSGT00390000004697"/>
<dbReference type="InParanoid" id="Q9VJ62"/>
<dbReference type="OMA" id="WKNDDEP"/>
<dbReference type="OrthoDB" id="21550at2759"/>
<dbReference type="PhylomeDB" id="Q9VJ62"/>
<dbReference type="BioGRID-ORCS" id="35125">
    <property type="hits" value="0 hits in 1 CRISPR screen"/>
</dbReference>
<dbReference type="GenomeRNAi" id="35125"/>
<dbReference type="PRO" id="PR:Q9VJ62"/>
<dbReference type="Proteomes" id="UP000000803">
    <property type="component" value="Chromosome 2L"/>
</dbReference>
<dbReference type="Bgee" id="FBgn0032701">
    <property type="expression patterns" value="Expressed in adult Malpighian tubule (Drosophila) and 73 other cell types or tissues"/>
</dbReference>
<dbReference type="ExpressionAtlas" id="Q9VJ62">
    <property type="expression patterns" value="baseline and differential"/>
</dbReference>
<dbReference type="GO" id="GO:0005634">
    <property type="term" value="C:nucleus"/>
    <property type="evidence" value="ECO:0007669"/>
    <property type="project" value="UniProtKB-SubCell"/>
</dbReference>
<dbReference type="GO" id="GO:0005732">
    <property type="term" value="C:sno(s)RNA-containing ribonucleoprotein complex"/>
    <property type="evidence" value="ECO:0000250"/>
    <property type="project" value="UniProtKB"/>
</dbReference>
<dbReference type="GO" id="GO:0003723">
    <property type="term" value="F:RNA binding"/>
    <property type="evidence" value="ECO:0000250"/>
    <property type="project" value="UniProtKB"/>
</dbReference>
<dbReference type="GO" id="GO:0000493">
    <property type="term" value="P:box H/ACA snoRNP assembly"/>
    <property type="evidence" value="ECO:0000318"/>
    <property type="project" value="GO_Central"/>
</dbReference>
<dbReference type="GO" id="GO:0001522">
    <property type="term" value="P:pseudouridine synthesis"/>
    <property type="evidence" value="ECO:0007669"/>
    <property type="project" value="InterPro"/>
</dbReference>
<dbReference type="GO" id="GO:0042254">
    <property type="term" value="P:ribosome biogenesis"/>
    <property type="evidence" value="ECO:0000250"/>
    <property type="project" value="UniProtKB"/>
</dbReference>
<dbReference type="GO" id="GO:0006364">
    <property type="term" value="P:rRNA processing"/>
    <property type="evidence" value="ECO:0007669"/>
    <property type="project" value="UniProtKB-KW"/>
</dbReference>
<dbReference type="FunFam" id="2.40.10.230:FF:000002">
    <property type="entry name" value="H/ACA ribonucleoprotein complex non-core subunit NAF1"/>
    <property type="match status" value="1"/>
</dbReference>
<dbReference type="Gene3D" id="2.40.10.230">
    <property type="entry name" value="Probable tRNA pseudouridine synthase domain"/>
    <property type="match status" value="1"/>
</dbReference>
<dbReference type="InterPro" id="IPR038664">
    <property type="entry name" value="Gar1/Naf1_Cbf5-bd_sf"/>
</dbReference>
<dbReference type="InterPro" id="IPR007504">
    <property type="entry name" value="H/ACA_rnp_Gar1/Naf1"/>
</dbReference>
<dbReference type="InterPro" id="IPR040309">
    <property type="entry name" value="Naf1"/>
</dbReference>
<dbReference type="InterPro" id="IPR009000">
    <property type="entry name" value="Transl_B-barrel_sf"/>
</dbReference>
<dbReference type="PANTHER" id="PTHR31633">
    <property type="entry name" value="H/ACA RIBONUCLEOPROTEIN COMPLEX NON-CORE SUBUNIT NAF1"/>
    <property type="match status" value="1"/>
</dbReference>
<dbReference type="PANTHER" id="PTHR31633:SF1">
    <property type="entry name" value="H_ACA RIBONUCLEOPROTEIN COMPLEX NON-CORE SUBUNIT NAF1"/>
    <property type="match status" value="1"/>
</dbReference>
<dbReference type="Pfam" id="PF04410">
    <property type="entry name" value="Gar1"/>
    <property type="match status" value="1"/>
</dbReference>
<dbReference type="SUPFAM" id="SSF50447">
    <property type="entry name" value="Translation proteins"/>
    <property type="match status" value="1"/>
</dbReference>
<gene>
    <name evidence="6" type="ORF">CG10341</name>
</gene>
<feature type="chain" id="PRO_0000315640" description="H/ACA ribonucleoprotein complex non-core subunit NAF1">
    <location>
        <begin position="1"/>
        <end position="564"/>
    </location>
</feature>
<feature type="region of interest" description="Disordered" evidence="3">
    <location>
        <begin position="1"/>
        <end position="29"/>
    </location>
</feature>
<feature type="region of interest" description="Disordered" evidence="3">
    <location>
        <begin position="108"/>
        <end position="218"/>
    </location>
</feature>
<feature type="region of interest" description="Disordered" evidence="3">
    <location>
        <begin position="238"/>
        <end position="264"/>
    </location>
</feature>
<feature type="region of interest" description="Disordered" evidence="3">
    <location>
        <begin position="387"/>
        <end position="489"/>
    </location>
</feature>
<feature type="region of interest" description="Disordered" evidence="3">
    <location>
        <begin position="538"/>
        <end position="564"/>
    </location>
</feature>
<feature type="compositionally biased region" description="Low complexity" evidence="3">
    <location>
        <begin position="146"/>
        <end position="157"/>
    </location>
</feature>
<feature type="compositionally biased region" description="Acidic residues" evidence="3">
    <location>
        <begin position="238"/>
        <end position="249"/>
    </location>
</feature>
<feature type="compositionally biased region" description="Basic and acidic residues" evidence="3">
    <location>
        <begin position="388"/>
        <end position="402"/>
    </location>
</feature>
<feature type="compositionally biased region" description="Low complexity" evidence="3">
    <location>
        <begin position="426"/>
        <end position="446"/>
    </location>
</feature>
<feature type="compositionally biased region" description="Polar residues" evidence="3">
    <location>
        <begin position="468"/>
        <end position="489"/>
    </location>
</feature>
<feature type="compositionally biased region" description="Pro residues" evidence="3">
    <location>
        <begin position="538"/>
        <end position="553"/>
    </location>
</feature>
<feature type="compositionally biased region" description="Polar residues" evidence="3">
    <location>
        <begin position="554"/>
        <end position="564"/>
    </location>
</feature>
<feature type="modified residue" description="Phosphothreonine" evidence="4">
    <location>
        <position position="250"/>
    </location>
</feature>
<feature type="modified residue" description="Phosphoserine" evidence="4">
    <location>
        <position position="254"/>
    </location>
</feature>
<feature type="modified residue" description="Phosphoserine" evidence="4">
    <location>
        <position position="403"/>
    </location>
</feature>
<feature type="modified residue" description="Phosphothreonine" evidence="4">
    <location>
        <position position="427"/>
    </location>
</feature>
<feature type="modified residue" description="Phosphoserine" evidence="4">
    <location>
        <position position="429"/>
    </location>
</feature>
<feature type="modified residue" description="Phosphothreonine" evidence="4">
    <location>
        <position position="432"/>
    </location>
</feature>
<name>NAF1_DROME</name>
<proteinExistence type="evidence at protein level"/>
<comment type="function">
    <text evidence="1">RNA-binding protein required for the maturation of the box H/ACA small nucleolar ribonucleoprotein (H/ACA snoRNP) complex and ribosome biogenesis. During assembly of the H/ACA snoRNP complex it associates with the complex and dissociates during complex maturation, becoming replaced by Gar1 to yield mature H/ACA snoRNP complex (By similarity).</text>
</comment>
<comment type="subunit">
    <text evidence="1">During assembly of the complex, component of the box H/ACA small nucleolar ribonucleoprotein (H/ACA snoRNP) complex.</text>
</comment>
<comment type="subcellular location">
    <subcellularLocation>
        <location evidence="2">Nucleus</location>
    </subcellularLocation>
</comment>
<comment type="similarity">
    <text evidence="5">Belongs to the NAF1 family.</text>
</comment>
<keyword id="KW-0539">Nucleus</keyword>
<keyword id="KW-0597">Phosphoprotein</keyword>
<keyword id="KW-1185">Reference proteome</keyword>
<keyword id="KW-0690">Ribosome biogenesis</keyword>
<keyword id="KW-0694">RNA-binding</keyword>
<keyword id="KW-0698">rRNA processing</keyword>
<protein>
    <recommendedName>
        <fullName>H/ACA ribonucleoprotein complex non-core subunit NAF1</fullName>
    </recommendedName>
</protein>
<evidence type="ECO:0000250" key="1"/>
<evidence type="ECO:0000250" key="2">
    <source>
        <dbReference type="UniProtKB" id="P53919"/>
    </source>
</evidence>
<evidence type="ECO:0000256" key="3">
    <source>
        <dbReference type="SAM" id="MobiDB-lite"/>
    </source>
</evidence>
<evidence type="ECO:0000269" key="4">
    <source>
    </source>
</evidence>
<evidence type="ECO:0000305" key="5"/>
<evidence type="ECO:0000312" key="6">
    <source>
        <dbReference type="FlyBase" id="FBgn0032701"/>
    </source>
</evidence>
<evidence type="ECO:0000312" key="7">
    <source>
        <dbReference type="Proteomes" id="UP000000803"/>
    </source>
</evidence>
<accession>Q9VJ62</accession>
<accession>Q961H3</accession>
<reference key="1">
    <citation type="journal article" date="2000" name="Science">
        <title>The genome sequence of Drosophila melanogaster.</title>
        <authorList>
            <person name="Adams M.D."/>
            <person name="Celniker S.E."/>
            <person name="Holt R.A."/>
            <person name="Evans C.A."/>
            <person name="Gocayne J.D."/>
            <person name="Amanatides P.G."/>
            <person name="Scherer S.E."/>
            <person name="Li P.W."/>
            <person name="Hoskins R.A."/>
            <person name="Galle R.F."/>
            <person name="George R.A."/>
            <person name="Lewis S.E."/>
            <person name="Richards S."/>
            <person name="Ashburner M."/>
            <person name="Henderson S.N."/>
            <person name="Sutton G.G."/>
            <person name="Wortman J.R."/>
            <person name="Yandell M.D."/>
            <person name="Zhang Q."/>
            <person name="Chen L.X."/>
            <person name="Brandon R.C."/>
            <person name="Rogers Y.-H.C."/>
            <person name="Blazej R.G."/>
            <person name="Champe M."/>
            <person name="Pfeiffer B.D."/>
            <person name="Wan K.H."/>
            <person name="Doyle C."/>
            <person name="Baxter E.G."/>
            <person name="Helt G."/>
            <person name="Nelson C.R."/>
            <person name="Miklos G.L.G."/>
            <person name="Abril J.F."/>
            <person name="Agbayani A."/>
            <person name="An H.-J."/>
            <person name="Andrews-Pfannkoch C."/>
            <person name="Baldwin D."/>
            <person name="Ballew R.M."/>
            <person name="Basu A."/>
            <person name="Baxendale J."/>
            <person name="Bayraktaroglu L."/>
            <person name="Beasley E.M."/>
            <person name="Beeson K.Y."/>
            <person name="Benos P.V."/>
            <person name="Berman B.P."/>
            <person name="Bhandari D."/>
            <person name="Bolshakov S."/>
            <person name="Borkova D."/>
            <person name="Botchan M.R."/>
            <person name="Bouck J."/>
            <person name="Brokstein P."/>
            <person name="Brottier P."/>
            <person name="Burtis K.C."/>
            <person name="Busam D.A."/>
            <person name="Butler H."/>
            <person name="Cadieu E."/>
            <person name="Center A."/>
            <person name="Chandra I."/>
            <person name="Cherry J.M."/>
            <person name="Cawley S."/>
            <person name="Dahlke C."/>
            <person name="Davenport L.B."/>
            <person name="Davies P."/>
            <person name="de Pablos B."/>
            <person name="Delcher A."/>
            <person name="Deng Z."/>
            <person name="Mays A.D."/>
            <person name="Dew I."/>
            <person name="Dietz S.M."/>
            <person name="Dodson K."/>
            <person name="Doup L.E."/>
            <person name="Downes M."/>
            <person name="Dugan-Rocha S."/>
            <person name="Dunkov B.C."/>
            <person name="Dunn P."/>
            <person name="Durbin K.J."/>
            <person name="Evangelista C.C."/>
            <person name="Ferraz C."/>
            <person name="Ferriera S."/>
            <person name="Fleischmann W."/>
            <person name="Fosler C."/>
            <person name="Gabrielian A.E."/>
            <person name="Garg N.S."/>
            <person name="Gelbart W.M."/>
            <person name="Glasser K."/>
            <person name="Glodek A."/>
            <person name="Gong F."/>
            <person name="Gorrell J.H."/>
            <person name="Gu Z."/>
            <person name="Guan P."/>
            <person name="Harris M."/>
            <person name="Harris N.L."/>
            <person name="Harvey D.A."/>
            <person name="Heiman T.J."/>
            <person name="Hernandez J.R."/>
            <person name="Houck J."/>
            <person name="Hostin D."/>
            <person name="Houston K.A."/>
            <person name="Howland T.J."/>
            <person name="Wei M.-H."/>
            <person name="Ibegwam C."/>
            <person name="Jalali M."/>
            <person name="Kalush F."/>
            <person name="Karpen G.H."/>
            <person name="Ke Z."/>
            <person name="Kennison J.A."/>
            <person name="Ketchum K.A."/>
            <person name="Kimmel B.E."/>
            <person name="Kodira C.D."/>
            <person name="Kraft C.L."/>
            <person name="Kravitz S."/>
            <person name="Kulp D."/>
            <person name="Lai Z."/>
            <person name="Lasko P."/>
            <person name="Lei Y."/>
            <person name="Levitsky A.A."/>
            <person name="Li J.H."/>
            <person name="Li Z."/>
            <person name="Liang Y."/>
            <person name="Lin X."/>
            <person name="Liu X."/>
            <person name="Mattei B."/>
            <person name="McIntosh T.C."/>
            <person name="McLeod M.P."/>
            <person name="McPherson D."/>
            <person name="Merkulov G."/>
            <person name="Milshina N.V."/>
            <person name="Mobarry C."/>
            <person name="Morris J."/>
            <person name="Moshrefi A."/>
            <person name="Mount S.M."/>
            <person name="Moy M."/>
            <person name="Murphy B."/>
            <person name="Murphy L."/>
            <person name="Muzny D.M."/>
            <person name="Nelson D.L."/>
            <person name="Nelson D.R."/>
            <person name="Nelson K.A."/>
            <person name="Nixon K."/>
            <person name="Nusskern D.R."/>
            <person name="Pacleb J.M."/>
            <person name="Palazzolo M."/>
            <person name="Pittman G.S."/>
            <person name="Pan S."/>
            <person name="Pollard J."/>
            <person name="Puri V."/>
            <person name="Reese M.G."/>
            <person name="Reinert K."/>
            <person name="Remington K."/>
            <person name="Saunders R.D.C."/>
            <person name="Scheeler F."/>
            <person name="Shen H."/>
            <person name="Shue B.C."/>
            <person name="Siden-Kiamos I."/>
            <person name="Simpson M."/>
            <person name="Skupski M.P."/>
            <person name="Smith T.J."/>
            <person name="Spier E."/>
            <person name="Spradling A.C."/>
            <person name="Stapleton M."/>
            <person name="Strong R."/>
            <person name="Sun E."/>
            <person name="Svirskas R."/>
            <person name="Tector C."/>
            <person name="Turner R."/>
            <person name="Venter E."/>
            <person name="Wang A.H."/>
            <person name="Wang X."/>
            <person name="Wang Z.-Y."/>
            <person name="Wassarman D.A."/>
            <person name="Weinstock G.M."/>
            <person name="Weissenbach J."/>
            <person name="Williams S.M."/>
            <person name="Woodage T."/>
            <person name="Worley K.C."/>
            <person name="Wu D."/>
            <person name="Yang S."/>
            <person name="Yao Q.A."/>
            <person name="Ye J."/>
            <person name="Yeh R.-F."/>
            <person name="Zaveri J.S."/>
            <person name="Zhan M."/>
            <person name="Zhang G."/>
            <person name="Zhao Q."/>
            <person name="Zheng L."/>
            <person name="Zheng X.H."/>
            <person name="Zhong F.N."/>
            <person name="Zhong W."/>
            <person name="Zhou X."/>
            <person name="Zhu S.C."/>
            <person name="Zhu X."/>
            <person name="Smith H.O."/>
            <person name="Gibbs R.A."/>
            <person name="Myers E.W."/>
            <person name="Rubin G.M."/>
            <person name="Venter J.C."/>
        </authorList>
    </citation>
    <scope>NUCLEOTIDE SEQUENCE [LARGE SCALE GENOMIC DNA]</scope>
    <source>
        <strain>Berkeley</strain>
    </source>
</reference>
<reference key="2">
    <citation type="journal article" date="2002" name="Genome Biol.">
        <title>Annotation of the Drosophila melanogaster euchromatic genome: a systematic review.</title>
        <authorList>
            <person name="Misra S."/>
            <person name="Crosby M.A."/>
            <person name="Mungall C.J."/>
            <person name="Matthews B.B."/>
            <person name="Campbell K.S."/>
            <person name="Hradecky P."/>
            <person name="Huang Y."/>
            <person name="Kaminker J.S."/>
            <person name="Millburn G.H."/>
            <person name="Prochnik S.E."/>
            <person name="Smith C.D."/>
            <person name="Tupy J.L."/>
            <person name="Whitfield E.J."/>
            <person name="Bayraktaroglu L."/>
            <person name="Berman B.P."/>
            <person name="Bettencourt B.R."/>
            <person name="Celniker S.E."/>
            <person name="de Grey A.D.N.J."/>
            <person name="Drysdale R.A."/>
            <person name="Harris N.L."/>
            <person name="Richter J."/>
            <person name="Russo S."/>
            <person name="Schroeder A.J."/>
            <person name="Shu S.Q."/>
            <person name="Stapleton M."/>
            <person name="Yamada C."/>
            <person name="Ashburner M."/>
            <person name="Gelbart W.M."/>
            <person name="Rubin G.M."/>
            <person name="Lewis S.E."/>
        </authorList>
    </citation>
    <scope>GENOME REANNOTATION</scope>
    <source>
        <strain>Berkeley</strain>
    </source>
</reference>
<reference key="3">
    <citation type="journal article" date="2002" name="Genome Biol.">
        <title>A Drosophila full-length cDNA resource.</title>
        <authorList>
            <person name="Stapleton M."/>
            <person name="Carlson J.W."/>
            <person name="Brokstein P."/>
            <person name="Yu C."/>
            <person name="Champe M."/>
            <person name="George R.A."/>
            <person name="Guarin H."/>
            <person name="Kronmiller B."/>
            <person name="Pacleb J.M."/>
            <person name="Park S."/>
            <person name="Wan K.H."/>
            <person name="Rubin G.M."/>
            <person name="Celniker S.E."/>
        </authorList>
    </citation>
    <scope>NUCLEOTIDE SEQUENCE [LARGE SCALE MRNA]</scope>
    <source>
        <strain>Berkeley</strain>
        <tissue>Head</tissue>
    </source>
</reference>
<reference key="4">
    <citation type="journal article" date="2008" name="J. Proteome Res.">
        <title>Phosphoproteome analysis of Drosophila melanogaster embryos.</title>
        <authorList>
            <person name="Zhai B."/>
            <person name="Villen J."/>
            <person name="Beausoleil S.A."/>
            <person name="Mintseris J."/>
            <person name="Gygi S.P."/>
        </authorList>
    </citation>
    <scope>PHOSPHORYLATION [LARGE SCALE ANALYSIS] AT THR-250; SER-254; SER-403; THR-427; SER-429 AND THR-432</scope>
    <scope>IDENTIFICATION BY MASS SPECTROMETRY</scope>
    <source>
        <tissue>Embryo</tissue>
    </source>
</reference>